<sequence>MTAEETVNVKEVEIIKLILDFLNSKKLHISMLALEKESGVINGLFSDDMLFLRQLILDGQWDEVLQFIQPLECMEKFDKKRFRYIILKQKFLEALCVNNAMSAEDEPQHLEFTMQEAVQCLHALEEYCPSKDDYSKLCLLLTLPRLTNHAEFKDWNPSTARVHCFEEACVMVAEFIPADRKLSEAGFKASNNRLFQLVMKGLLYECCVEFCQSKATGEEITESEVLLGIDLLCGNGCDDLDLSLLSWLQNLPSSVFSCAFEQKMLNIHVDKLLKPTKAAYADLLTPLISKLSPYPSSPMRRPQSADAYMTRSLNPALDGLTCGLTSHDKRISDLGNKTSPMSHSFANFHYPGVQNLSRSLMLENTECHSIYEESPERDTPVDAQRPIGSEILGQSSVSEKEPANGAQNPGPAKQEKNELRDSTEQFQEYYRQRLRYQQHLEQKEQQRQIYQQMLLEGGVNQEDGPDQQQNLTEQFLNRSIQKLGELNIGMDGLGNEVSALNQQCNGSKGNGSNGSSVTSFTTPPQDSSQRLTHDASNIHTSTPRNPGSTNHIPFLEESPCGSQISSEHSVIKPPLGDSPGSLSRSKGEEDDKSKKQFVCINILEDTQAVRAVAFHPAGGLYAVGSNSKTLRVCAYPDVIDPSAHETPKQPVVRFKRNKHHKGSIYCVAWSPCGQLLATGSNDKYVKVLPFNAETCNATGPDLEFSMHDGTIRDLAFMEGPESGGAILISAGAGDCNIYTTDCQRGQGLHALSGHTGHILALYTWSGWMIASGSQDKTVRFWDLRVPSCVRVVGTTFHGTGSAVASVAVDPSGRLLATGQEDSSCMLYDIRGGRMVQSYHPHSSDVRSVRFSPGAHYLLTGSYDMKIKVTDLQGDLTKQLPIMVVGEHKDKVIQCRWHTQDLSFLSSSADRTVTLWTYNG</sequence>
<comment type="subunit">
    <text evidence="1">Interacts with MAP1S (via WD repeats).</text>
</comment>
<comment type="interaction">
    <interactant intactId="EBI-723239">
        <id>O94967</id>
    </interactant>
    <interactant intactId="EBI-10314711">
        <id>Q9NVQ4</id>
        <label>FAIM</label>
    </interactant>
    <organismsDiffer>false</organismsDiffer>
    <experiments>2</experiments>
</comment>
<comment type="interaction">
    <interactant intactId="EBI-723239">
        <id>O94967</id>
    </interactant>
    <interactant intactId="EBI-749995">
        <id>P56279</id>
        <label>TCL1A</label>
    </interactant>
    <organismsDiffer>false</organismsDiffer>
    <experiments>3</experiments>
</comment>
<comment type="subcellular location">
    <subcellularLocation>
        <location evidence="1">Cytoplasm</location>
        <location evidence="1">Cytoskeleton</location>
    </subcellularLocation>
    <text evidence="1">Localization along microtubules is mediated by MAP1S.</text>
</comment>
<comment type="alternative products">
    <event type="alternative splicing"/>
    <isoform>
        <id>O94967-1</id>
        <name>1</name>
        <sequence type="displayed"/>
    </isoform>
    <isoform>
        <id>O94967-2</id>
        <name>2</name>
        <sequence type="described" ref="VSP_012093"/>
    </isoform>
    <isoform>
        <id>O94967-3</id>
        <name>3</name>
        <sequence type="described" ref="VSP_035045"/>
    </isoform>
    <isoform>
        <id>O94967-4</id>
        <name>4</name>
        <sequence type="described" ref="VSP_046727 VSP_035045"/>
    </isoform>
</comment>
<comment type="sequence caution" evidence="9">
    <conflict type="frameshift">
        <sequence resource="EMBL" id="AK225781"/>
    </conflict>
</comment>
<comment type="sequence caution" evidence="9">
    <conflict type="erroneous initiation">
        <sequence resource="EMBL-CDS" id="BAA74916"/>
    </conflict>
    <text>Extended N-terminus.</text>
</comment>
<evidence type="ECO:0000250" key="1"/>
<evidence type="ECO:0000250" key="2">
    <source>
        <dbReference type="UniProtKB" id="Q8CGF6"/>
    </source>
</evidence>
<evidence type="ECO:0000255" key="3">
    <source>
        <dbReference type="PROSITE-ProRule" id="PRU00058"/>
    </source>
</evidence>
<evidence type="ECO:0000255" key="4">
    <source>
        <dbReference type="PROSITE-ProRule" id="PRU00126"/>
    </source>
</evidence>
<evidence type="ECO:0000256" key="5">
    <source>
        <dbReference type="SAM" id="MobiDB-lite"/>
    </source>
</evidence>
<evidence type="ECO:0000303" key="6">
    <source>
    </source>
</evidence>
<evidence type="ECO:0000303" key="7">
    <source>
    </source>
</evidence>
<evidence type="ECO:0000303" key="8">
    <source ref="3"/>
</evidence>
<evidence type="ECO:0000305" key="9"/>
<evidence type="ECO:0007744" key="10">
    <source>
    </source>
</evidence>
<evidence type="ECO:0007744" key="11">
    <source>
    </source>
</evidence>
<evidence type="ECO:0007744" key="12">
    <source>
    </source>
</evidence>
<feature type="chain" id="PRO_0000051397" description="WD repeat-containing protein 47">
    <location>
        <begin position="1"/>
        <end position="919"/>
    </location>
</feature>
<feature type="domain" description="LisH" evidence="4">
    <location>
        <begin position="10"/>
        <end position="42"/>
    </location>
</feature>
<feature type="domain" description="CTLH" evidence="3">
    <location>
        <begin position="45"/>
        <end position="102"/>
    </location>
</feature>
<feature type="repeat" description="WD 1">
    <location>
        <begin position="604"/>
        <end position="643"/>
    </location>
</feature>
<feature type="repeat" description="WD 2">
    <location>
        <begin position="659"/>
        <end position="698"/>
    </location>
</feature>
<feature type="repeat" description="WD 3">
    <location>
        <begin position="706"/>
        <end position="748"/>
    </location>
</feature>
<feature type="repeat" description="WD 4">
    <location>
        <begin position="753"/>
        <end position="791"/>
    </location>
</feature>
<feature type="repeat" description="WD 5">
    <location>
        <begin position="798"/>
        <end position="837"/>
    </location>
</feature>
<feature type="repeat" description="WD 6">
    <location>
        <begin position="840"/>
        <end position="879"/>
    </location>
</feature>
<feature type="repeat" description="WD 7">
    <location>
        <begin position="886"/>
        <end position="918"/>
    </location>
</feature>
<feature type="region of interest" description="Disordered" evidence="5">
    <location>
        <begin position="393"/>
        <end position="421"/>
    </location>
</feature>
<feature type="region of interest" description="Disordered" evidence="5">
    <location>
        <begin position="500"/>
        <end position="590"/>
    </location>
</feature>
<feature type="compositionally biased region" description="Polar residues" evidence="5">
    <location>
        <begin position="517"/>
        <end position="551"/>
    </location>
</feature>
<feature type="modified residue" description="Phosphothreonine" evidence="10">
    <location>
        <position position="285"/>
    </location>
</feature>
<feature type="modified residue" description="Phosphoserine" evidence="2">
    <location>
        <position position="289"/>
    </location>
</feature>
<feature type="modified residue" description="Phosphoserine" evidence="10 11">
    <location>
        <position position="292"/>
    </location>
</feature>
<feature type="modified residue" description="Phosphoserine" evidence="10">
    <location>
        <position position="297"/>
    </location>
</feature>
<feature type="modified residue" description="Phosphoserine" evidence="12">
    <location>
        <position position="312"/>
    </location>
</feature>
<feature type="modified residue" description="Phosphoserine" evidence="12">
    <location>
        <position position="422"/>
    </location>
</feature>
<feature type="modified residue" description="Phosphothreonine" evidence="12">
    <location>
        <position position="542"/>
    </location>
</feature>
<feature type="splice variant" id="VSP_012093" description="In isoform 2." evidence="7">
    <location>
        <begin position="54"/>
        <end position="81"/>
    </location>
</feature>
<feature type="splice variant" id="VSP_046727" description="In isoform 4." evidence="8">
    <original>H</original>
    <variation>HVRFLFLK</variation>
    <location>
        <position position="109"/>
    </location>
</feature>
<feature type="splice variant" id="VSP_035045" description="In isoform 3 and isoform 4." evidence="6 7 8">
    <original>R</original>
    <variation>RS</variation>
    <location>
        <position position="377"/>
    </location>
</feature>
<feature type="sequence conflict" description="In Ref. 6; AAH39254." evidence="9" ref="6">
    <original>P</original>
    <variation>Q</variation>
    <location>
        <position position="298"/>
    </location>
</feature>
<feature type="sequence conflict" description="In Ref. 6; AAH39254." evidence="9" ref="6">
    <original>S</original>
    <variation>C</variation>
    <location>
        <position position="369"/>
    </location>
</feature>
<feature type="sequence conflict" description="In Ref. 6; AAH39254." evidence="9" ref="6">
    <original>T</original>
    <variation>TVS</variation>
    <location>
        <position position="698"/>
    </location>
</feature>
<feature type="sequence conflict" description="In Ref. 6; AAH34964." evidence="9" ref="6">
    <original>R</original>
    <variation>G</variation>
    <location>
        <position position="779"/>
    </location>
</feature>
<feature type="sequence conflict" description="In Ref. 6; AAH34964." evidence="9" ref="6">
    <original>V</original>
    <variation>A</variation>
    <location>
        <position position="789"/>
    </location>
</feature>
<keyword id="KW-0025">Alternative splicing</keyword>
<keyword id="KW-0963">Cytoplasm</keyword>
<keyword id="KW-0206">Cytoskeleton</keyword>
<keyword id="KW-0217">Developmental protein</keyword>
<keyword id="KW-0493">Microtubule</keyword>
<keyword id="KW-0597">Phosphoprotein</keyword>
<keyword id="KW-1267">Proteomics identification</keyword>
<keyword id="KW-1185">Reference proteome</keyword>
<keyword id="KW-0677">Repeat</keyword>
<keyword id="KW-0853">WD repeat</keyword>
<accession>O94967</accession>
<accession>A8MX09</accession>
<accession>Q5TYV7</accession>
<accession>Q5TYV8</accession>
<accession>Q5TYV9</accession>
<accession>Q8IXT7</accession>
<accession>Q8IYU9</accession>
<proteinExistence type="evidence at protein level"/>
<dbReference type="EMBL" id="AB020700">
    <property type="protein sequence ID" value="BAA74916.2"/>
    <property type="status" value="ALT_INIT"/>
    <property type="molecule type" value="mRNA"/>
</dbReference>
<dbReference type="EMBL" id="AK289789">
    <property type="protein sequence ID" value="BAF82478.1"/>
    <property type="molecule type" value="mRNA"/>
</dbReference>
<dbReference type="EMBL" id="AK225781">
    <property type="status" value="NOT_ANNOTATED_CDS"/>
    <property type="molecule type" value="mRNA"/>
</dbReference>
<dbReference type="EMBL" id="BX679664">
    <property type="status" value="NOT_ANNOTATED_CDS"/>
    <property type="molecule type" value="Genomic_DNA"/>
</dbReference>
<dbReference type="EMBL" id="AL449266">
    <property type="status" value="NOT_ANNOTATED_CDS"/>
    <property type="molecule type" value="Genomic_DNA"/>
</dbReference>
<dbReference type="EMBL" id="CH471122">
    <property type="protein sequence ID" value="EAW56350.1"/>
    <property type="molecule type" value="Genomic_DNA"/>
</dbReference>
<dbReference type="EMBL" id="CH471122">
    <property type="protein sequence ID" value="EAW56351.1"/>
    <property type="molecule type" value="Genomic_DNA"/>
</dbReference>
<dbReference type="EMBL" id="BC034964">
    <property type="protein sequence ID" value="AAH34964.1"/>
    <property type="molecule type" value="mRNA"/>
</dbReference>
<dbReference type="EMBL" id="BC039254">
    <property type="protein sequence ID" value="AAH39254.1"/>
    <property type="molecule type" value="mRNA"/>
</dbReference>
<dbReference type="CCDS" id="CCDS30787.1">
    <molecule id="O94967-3"/>
</dbReference>
<dbReference type="CCDS" id="CCDS44186.1">
    <molecule id="O94967-4"/>
</dbReference>
<dbReference type="CCDS" id="CCDS44187.1">
    <molecule id="O94967-1"/>
</dbReference>
<dbReference type="RefSeq" id="NP_001136022.1">
    <molecule id="O94967-4"/>
    <property type="nucleotide sequence ID" value="NM_001142550.2"/>
</dbReference>
<dbReference type="RefSeq" id="NP_001136023.1">
    <molecule id="O94967-1"/>
    <property type="nucleotide sequence ID" value="NM_001142551.2"/>
</dbReference>
<dbReference type="RefSeq" id="NP_055784.3">
    <molecule id="O94967-3"/>
    <property type="nucleotide sequence ID" value="NM_014969.5"/>
</dbReference>
<dbReference type="RefSeq" id="XP_016856186.1">
    <molecule id="O94967-1"/>
    <property type="nucleotide sequence ID" value="XM_017000697.3"/>
</dbReference>
<dbReference type="RefSeq" id="XP_047305478.1">
    <molecule id="O94967-3"/>
    <property type="nucleotide sequence ID" value="XM_047449522.1"/>
</dbReference>
<dbReference type="RefSeq" id="XP_054191184.1">
    <molecule id="O94967-3"/>
    <property type="nucleotide sequence ID" value="XM_054335209.1"/>
</dbReference>
<dbReference type="RefSeq" id="XP_054191185.1">
    <molecule id="O94967-1"/>
    <property type="nucleotide sequence ID" value="XM_054335210.1"/>
</dbReference>
<dbReference type="SMR" id="O94967"/>
<dbReference type="BioGRID" id="116574">
    <property type="interactions" value="39"/>
</dbReference>
<dbReference type="FunCoup" id="O94967">
    <property type="interactions" value="1936"/>
</dbReference>
<dbReference type="IntAct" id="O94967">
    <property type="interactions" value="32"/>
</dbReference>
<dbReference type="MINT" id="O94967"/>
<dbReference type="STRING" id="9606.ENSP00000383599"/>
<dbReference type="TCDB" id="8.A.92.1.16">
    <property type="family name" value="the g-protein AlphaBetaGama complex (gpc) family"/>
</dbReference>
<dbReference type="GlyGen" id="O94967">
    <property type="glycosylation" value="2 sites, 1 N-linked glycan (1 site), 1 O-linked glycan (1 site)"/>
</dbReference>
<dbReference type="iPTMnet" id="O94967"/>
<dbReference type="PhosphoSitePlus" id="O94967"/>
<dbReference type="BioMuta" id="WDR47"/>
<dbReference type="jPOST" id="O94967"/>
<dbReference type="MassIVE" id="O94967"/>
<dbReference type="PaxDb" id="9606-ENSP00000383599"/>
<dbReference type="PeptideAtlas" id="O94967"/>
<dbReference type="ProteomicsDB" id="2284"/>
<dbReference type="ProteomicsDB" id="50587">
    <molecule id="O94967-1"/>
</dbReference>
<dbReference type="ProteomicsDB" id="50588">
    <molecule id="O94967-2"/>
</dbReference>
<dbReference type="ProteomicsDB" id="50589">
    <molecule id="O94967-3"/>
</dbReference>
<dbReference type="Pumba" id="O94967"/>
<dbReference type="Antibodypedia" id="33741">
    <property type="antibodies" value="48 antibodies from 13 providers"/>
</dbReference>
<dbReference type="DNASU" id="22911"/>
<dbReference type="Ensembl" id="ENST00000361054.7">
    <molecule id="O94967-2"/>
    <property type="protein sequence ID" value="ENSP00000354339.3"/>
    <property type="gene ID" value="ENSG00000085433.17"/>
</dbReference>
<dbReference type="Ensembl" id="ENST00000369962.8">
    <molecule id="O94967-1"/>
    <property type="protein sequence ID" value="ENSP00000358979.3"/>
    <property type="gene ID" value="ENSG00000085433.17"/>
</dbReference>
<dbReference type="Ensembl" id="ENST00000369965.8">
    <molecule id="O94967-3"/>
    <property type="protein sequence ID" value="ENSP00000358982.4"/>
    <property type="gene ID" value="ENSG00000085433.17"/>
</dbReference>
<dbReference type="Ensembl" id="ENST00000400794.7">
    <molecule id="O94967-4"/>
    <property type="protein sequence ID" value="ENSP00000383599.3"/>
    <property type="gene ID" value="ENSG00000085433.17"/>
</dbReference>
<dbReference type="GeneID" id="22911"/>
<dbReference type="KEGG" id="hsa:22911"/>
<dbReference type="MANE-Select" id="ENST00000369962.8">
    <property type="protein sequence ID" value="ENSP00000358979.3"/>
    <property type="RefSeq nucleotide sequence ID" value="NM_001142551.2"/>
    <property type="RefSeq protein sequence ID" value="NP_001136023.1"/>
</dbReference>
<dbReference type="UCSC" id="uc001dwi.4">
    <molecule id="O94967-1"/>
    <property type="organism name" value="human"/>
</dbReference>
<dbReference type="AGR" id="HGNC:29141"/>
<dbReference type="CTD" id="22911"/>
<dbReference type="DisGeNET" id="22911"/>
<dbReference type="GeneCards" id="WDR47"/>
<dbReference type="HGNC" id="HGNC:29141">
    <property type="gene designation" value="WDR47"/>
</dbReference>
<dbReference type="HPA" id="ENSG00000085433">
    <property type="expression patterns" value="Tissue enhanced (brain)"/>
</dbReference>
<dbReference type="MIM" id="615734">
    <property type="type" value="gene"/>
</dbReference>
<dbReference type="neXtProt" id="NX_O94967"/>
<dbReference type="OpenTargets" id="ENSG00000085433"/>
<dbReference type="PharmGKB" id="PA134937302"/>
<dbReference type="VEuPathDB" id="HostDB:ENSG00000085433"/>
<dbReference type="eggNOG" id="KOG0641">
    <property type="taxonomic scope" value="Eukaryota"/>
</dbReference>
<dbReference type="GeneTree" id="ENSGT00940000155561"/>
<dbReference type="HOGENOM" id="CLU_014985_0_0_1"/>
<dbReference type="InParanoid" id="O94967"/>
<dbReference type="OMA" id="HICPTPE"/>
<dbReference type="OrthoDB" id="187712at2759"/>
<dbReference type="PAN-GO" id="O94967">
    <property type="GO annotations" value="0 GO annotations based on evolutionary models"/>
</dbReference>
<dbReference type="PhylomeDB" id="O94967"/>
<dbReference type="TreeFam" id="TF312810"/>
<dbReference type="PathwayCommons" id="O94967"/>
<dbReference type="SignaLink" id="O94967"/>
<dbReference type="BioGRID-ORCS" id="22911">
    <property type="hits" value="10 hits in 1158 CRISPR screens"/>
</dbReference>
<dbReference type="CD-CODE" id="DEE660B4">
    <property type="entry name" value="Stress granule"/>
</dbReference>
<dbReference type="ChiTaRS" id="WDR47">
    <property type="organism name" value="human"/>
</dbReference>
<dbReference type="GeneWiki" id="WDR47"/>
<dbReference type="GenomeRNAi" id="22911"/>
<dbReference type="Pharos" id="O94967">
    <property type="development level" value="Tdark"/>
</dbReference>
<dbReference type="PRO" id="PR:O94967"/>
<dbReference type="Proteomes" id="UP000005640">
    <property type="component" value="Chromosome 1"/>
</dbReference>
<dbReference type="RNAct" id="O94967">
    <property type="molecule type" value="protein"/>
</dbReference>
<dbReference type="Bgee" id="ENSG00000085433">
    <property type="expression patterns" value="Expressed in cortical plate and 201 other cell types or tissues"/>
</dbReference>
<dbReference type="ExpressionAtlas" id="O94967">
    <property type="expression patterns" value="baseline and differential"/>
</dbReference>
<dbReference type="GO" id="GO:0005737">
    <property type="term" value="C:cytoplasm"/>
    <property type="evidence" value="ECO:0007669"/>
    <property type="project" value="UniProtKB-KW"/>
</dbReference>
<dbReference type="GO" id="GO:0030425">
    <property type="term" value="C:dendrite"/>
    <property type="evidence" value="ECO:0007669"/>
    <property type="project" value="Ensembl"/>
</dbReference>
<dbReference type="GO" id="GO:0030426">
    <property type="term" value="C:growth cone"/>
    <property type="evidence" value="ECO:0007669"/>
    <property type="project" value="Ensembl"/>
</dbReference>
<dbReference type="GO" id="GO:0005874">
    <property type="term" value="C:microtubule"/>
    <property type="evidence" value="ECO:0007669"/>
    <property type="project" value="UniProtKB-KW"/>
</dbReference>
<dbReference type="GO" id="GO:0043025">
    <property type="term" value="C:neuronal cell body"/>
    <property type="evidence" value="ECO:0007669"/>
    <property type="project" value="Ensembl"/>
</dbReference>
<dbReference type="GO" id="GO:0008344">
    <property type="term" value="P:adult locomotory behavior"/>
    <property type="evidence" value="ECO:0007669"/>
    <property type="project" value="Ensembl"/>
</dbReference>
<dbReference type="GO" id="GO:0021960">
    <property type="term" value="P:anterior commissure morphogenesis"/>
    <property type="evidence" value="ECO:0007669"/>
    <property type="project" value="Ensembl"/>
</dbReference>
<dbReference type="GO" id="GO:0006914">
    <property type="term" value="P:autophagy"/>
    <property type="evidence" value="ECO:0007669"/>
    <property type="project" value="Ensembl"/>
</dbReference>
<dbReference type="GO" id="GO:0021801">
    <property type="term" value="P:cerebral cortex radial glia-guided migration"/>
    <property type="evidence" value="ECO:0007669"/>
    <property type="project" value="Ensembl"/>
</dbReference>
<dbReference type="GO" id="GO:0022038">
    <property type="term" value="P:corpus callosum development"/>
    <property type="evidence" value="ECO:0007669"/>
    <property type="project" value="Ensembl"/>
</dbReference>
<dbReference type="GO" id="GO:0120168">
    <property type="term" value="P:detection of hot stimulus involved in thermoception"/>
    <property type="evidence" value="ECO:0007669"/>
    <property type="project" value="Ensembl"/>
</dbReference>
<dbReference type="GO" id="GO:0000226">
    <property type="term" value="P:microtubule cytoskeleton organization"/>
    <property type="evidence" value="ECO:0007669"/>
    <property type="project" value="Ensembl"/>
</dbReference>
<dbReference type="GO" id="GO:0061744">
    <property type="term" value="P:motor behavior"/>
    <property type="evidence" value="ECO:0007669"/>
    <property type="project" value="Ensembl"/>
</dbReference>
<dbReference type="GO" id="GO:0007026">
    <property type="term" value="P:negative regulation of microtubule depolymerization"/>
    <property type="evidence" value="ECO:0007669"/>
    <property type="project" value="Ensembl"/>
</dbReference>
<dbReference type="GO" id="GO:0061351">
    <property type="term" value="P:neural precursor cell proliferation"/>
    <property type="evidence" value="ECO:0007669"/>
    <property type="project" value="Ensembl"/>
</dbReference>
<dbReference type="GO" id="GO:0097150">
    <property type="term" value="P:neuronal stem cell population maintenance"/>
    <property type="evidence" value="ECO:0007669"/>
    <property type="project" value="Ensembl"/>
</dbReference>
<dbReference type="CDD" id="cd00200">
    <property type="entry name" value="WD40"/>
    <property type="match status" value="1"/>
</dbReference>
<dbReference type="Gene3D" id="2.130.10.10">
    <property type="entry name" value="YVTN repeat-like/Quinoprotein amine dehydrogenase"/>
    <property type="match status" value="2"/>
</dbReference>
<dbReference type="InterPro" id="IPR006595">
    <property type="entry name" value="CTLH_C"/>
</dbReference>
<dbReference type="InterPro" id="IPR006594">
    <property type="entry name" value="LisH"/>
</dbReference>
<dbReference type="InterPro" id="IPR054532">
    <property type="entry name" value="TPL_SMU1_LisH-like"/>
</dbReference>
<dbReference type="InterPro" id="IPR015943">
    <property type="entry name" value="WD40/YVTN_repeat-like_dom_sf"/>
</dbReference>
<dbReference type="InterPro" id="IPR019775">
    <property type="entry name" value="WD40_repeat_CS"/>
</dbReference>
<dbReference type="InterPro" id="IPR036322">
    <property type="entry name" value="WD40_repeat_dom_sf"/>
</dbReference>
<dbReference type="InterPro" id="IPR001680">
    <property type="entry name" value="WD40_rpt"/>
</dbReference>
<dbReference type="InterPro" id="IPR040067">
    <property type="entry name" value="WDR47"/>
</dbReference>
<dbReference type="PANTHER" id="PTHR19863">
    <property type="entry name" value="NEMITIN (NEURONAL ENRICHED MAP INTERACTING PROTEIN) HOMOLOG"/>
    <property type="match status" value="1"/>
</dbReference>
<dbReference type="PANTHER" id="PTHR19863:SF5">
    <property type="entry name" value="WD REPEAT-CONTAINING PROTEIN 47"/>
    <property type="match status" value="1"/>
</dbReference>
<dbReference type="Pfam" id="PF17814">
    <property type="entry name" value="LisH_TPL"/>
    <property type="match status" value="1"/>
</dbReference>
<dbReference type="Pfam" id="PF00400">
    <property type="entry name" value="WD40"/>
    <property type="match status" value="6"/>
</dbReference>
<dbReference type="SMART" id="SM00668">
    <property type="entry name" value="CTLH"/>
    <property type="match status" value="1"/>
</dbReference>
<dbReference type="SMART" id="SM00667">
    <property type="entry name" value="LisH"/>
    <property type="match status" value="1"/>
</dbReference>
<dbReference type="SMART" id="SM00320">
    <property type="entry name" value="WD40"/>
    <property type="match status" value="7"/>
</dbReference>
<dbReference type="SUPFAM" id="SSF50978">
    <property type="entry name" value="WD40 repeat-like"/>
    <property type="match status" value="1"/>
</dbReference>
<dbReference type="PROSITE" id="PS50897">
    <property type="entry name" value="CTLH"/>
    <property type="match status" value="1"/>
</dbReference>
<dbReference type="PROSITE" id="PS50896">
    <property type="entry name" value="LISH"/>
    <property type="match status" value="1"/>
</dbReference>
<dbReference type="PROSITE" id="PS00678">
    <property type="entry name" value="WD_REPEATS_1"/>
    <property type="match status" value="1"/>
</dbReference>
<dbReference type="PROSITE" id="PS50082">
    <property type="entry name" value="WD_REPEATS_2"/>
    <property type="match status" value="5"/>
</dbReference>
<dbReference type="PROSITE" id="PS50294">
    <property type="entry name" value="WD_REPEATS_REGION"/>
    <property type="match status" value="1"/>
</dbReference>
<gene>
    <name type="primary">WDR47</name>
    <name type="synonym">KIAA0893</name>
</gene>
<protein>
    <recommendedName>
        <fullName>WD repeat-containing protein 47</fullName>
    </recommendedName>
    <alternativeName>
        <fullName>Neuronal enriched MAP-interacting protein</fullName>
        <shortName>Nemitin</shortName>
    </alternativeName>
</protein>
<organism>
    <name type="scientific">Homo sapiens</name>
    <name type="common">Human</name>
    <dbReference type="NCBI Taxonomy" id="9606"/>
    <lineage>
        <taxon>Eukaryota</taxon>
        <taxon>Metazoa</taxon>
        <taxon>Chordata</taxon>
        <taxon>Craniata</taxon>
        <taxon>Vertebrata</taxon>
        <taxon>Euteleostomi</taxon>
        <taxon>Mammalia</taxon>
        <taxon>Eutheria</taxon>
        <taxon>Euarchontoglires</taxon>
        <taxon>Primates</taxon>
        <taxon>Haplorrhini</taxon>
        <taxon>Catarrhini</taxon>
        <taxon>Hominidae</taxon>
        <taxon>Homo</taxon>
    </lineage>
</organism>
<name>WDR47_HUMAN</name>
<reference key="1">
    <citation type="journal article" date="1998" name="DNA Res.">
        <title>Prediction of the coding sequences of unidentified human genes. XII. The complete sequences of 100 new cDNA clones from brain which code for large proteins in vitro.</title>
        <authorList>
            <person name="Nagase T."/>
            <person name="Ishikawa K."/>
            <person name="Suyama M."/>
            <person name="Kikuno R."/>
            <person name="Hirosawa M."/>
            <person name="Miyajima N."/>
            <person name="Tanaka A."/>
            <person name="Kotani H."/>
            <person name="Nomura N."/>
            <person name="Ohara O."/>
        </authorList>
    </citation>
    <scope>NUCLEOTIDE SEQUENCE [LARGE SCALE MRNA] (ISOFORM 1)</scope>
    <source>
        <tissue>Brain</tissue>
    </source>
</reference>
<reference key="2">
    <citation type="journal article" date="2004" name="Nat. Genet.">
        <title>Complete sequencing and characterization of 21,243 full-length human cDNAs.</title>
        <authorList>
            <person name="Ota T."/>
            <person name="Suzuki Y."/>
            <person name="Nishikawa T."/>
            <person name="Otsuki T."/>
            <person name="Sugiyama T."/>
            <person name="Irie R."/>
            <person name="Wakamatsu A."/>
            <person name="Hayashi K."/>
            <person name="Sato H."/>
            <person name="Nagai K."/>
            <person name="Kimura K."/>
            <person name="Makita H."/>
            <person name="Sekine M."/>
            <person name="Obayashi M."/>
            <person name="Nishi T."/>
            <person name="Shibahara T."/>
            <person name="Tanaka T."/>
            <person name="Ishii S."/>
            <person name="Yamamoto J."/>
            <person name="Saito K."/>
            <person name="Kawai Y."/>
            <person name="Isono Y."/>
            <person name="Nakamura Y."/>
            <person name="Nagahari K."/>
            <person name="Murakami K."/>
            <person name="Yasuda T."/>
            <person name="Iwayanagi T."/>
            <person name="Wagatsuma M."/>
            <person name="Shiratori A."/>
            <person name="Sudo H."/>
            <person name="Hosoiri T."/>
            <person name="Kaku Y."/>
            <person name="Kodaira H."/>
            <person name="Kondo H."/>
            <person name="Sugawara M."/>
            <person name="Takahashi M."/>
            <person name="Kanda K."/>
            <person name="Yokoi T."/>
            <person name="Furuya T."/>
            <person name="Kikkawa E."/>
            <person name="Omura Y."/>
            <person name="Abe K."/>
            <person name="Kamihara K."/>
            <person name="Katsuta N."/>
            <person name="Sato K."/>
            <person name="Tanikawa M."/>
            <person name="Yamazaki M."/>
            <person name="Ninomiya K."/>
            <person name="Ishibashi T."/>
            <person name="Yamashita H."/>
            <person name="Murakawa K."/>
            <person name="Fujimori K."/>
            <person name="Tanai H."/>
            <person name="Kimata M."/>
            <person name="Watanabe M."/>
            <person name="Hiraoka S."/>
            <person name="Chiba Y."/>
            <person name="Ishida S."/>
            <person name="Ono Y."/>
            <person name="Takiguchi S."/>
            <person name="Watanabe S."/>
            <person name="Yosida M."/>
            <person name="Hotuta T."/>
            <person name="Kusano J."/>
            <person name="Kanehori K."/>
            <person name="Takahashi-Fujii A."/>
            <person name="Hara H."/>
            <person name="Tanase T.-O."/>
            <person name="Nomura Y."/>
            <person name="Togiya S."/>
            <person name="Komai F."/>
            <person name="Hara R."/>
            <person name="Takeuchi K."/>
            <person name="Arita M."/>
            <person name="Imose N."/>
            <person name="Musashino K."/>
            <person name="Yuuki H."/>
            <person name="Oshima A."/>
            <person name="Sasaki N."/>
            <person name="Aotsuka S."/>
            <person name="Yoshikawa Y."/>
            <person name="Matsunawa H."/>
            <person name="Ichihara T."/>
            <person name="Shiohata N."/>
            <person name="Sano S."/>
            <person name="Moriya S."/>
            <person name="Momiyama H."/>
            <person name="Satoh N."/>
            <person name="Takami S."/>
            <person name="Terashima Y."/>
            <person name="Suzuki O."/>
            <person name="Nakagawa S."/>
            <person name="Senoh A."/>
            <person name="Mizoguchi H."/>
            <person name="Goto Y."/>
            <person name="Shimizu F."/>
            <person name="Wakebe H."/>
            <person name="Hishigaki H."/>
            <person name="Watanabe T."/>
            <person name="Sugiyama A."/>
            <person name="Takemoto M."/>
            <person name="Kawakami B."/>
            <person name="Yamazaki M."/>
            <person name="Watanabe K."/>
            <person name="Kumagai A."/>
            <person name="Itakura S."/>
            <person name="Fukuzumi Y."/>
            <person name="Fujimori Y."/>
            <person name="Komiyama M."/>
            <person name="Tashiro H."/>
            <person name="Tanigami A."/>
            <person name="Fujiwara T."/>
            <person name="Ono T."/>
            <person name="Yamada K."/>
            <person name="Fujii Y."/>
            <person name="Ozaki K."/>
            <person name="Hirao M."/>
            <person name="Ohmori Y."/>
            <person name="Kawabata A."/>
            <person name="Hikiji T."/>
            <person name="Kobatake N."/>
            <person name="Inagaki H."/>
            <person name="Ikema Y."/>
            <person name="Okamoto S."/>
            <person name="Okitani R."/>
            <person name="Kawakami T."/>
            <person name="Noguchi S."/>
            <person name="Itoh T."/>
            <person name="Shigeta K."/>
            <person name="Senba T."/>
            <person name="Matsumura K."/>
            <person name="Nakajima Y."/>
            <person name="Mizuno T."/>
            <person name="Morinaga M."/>
            <person name="Sasaki M."/>
            <person name="Togashi T."/>
            <person name="Oyama M."/>
            <person name="Hata H."/>
            <person name="Watanabe M."/>
            <person name="Komatsu T."/>
            <person name="Mizushima-Sugano J."/>
            <person name="Satoh T."/>
            <person name="Shirai Y."/>
            <person name="Takahashi Y."/>
            <person name="Nakagawa K."/>
            <person name="Okumura K."/>
            <person name="Nagase T."/>
            <person name="Nomura N."/>
            <person name="Kikuchi H."/>
            <person name="Masuho Y."/>
            <person name="Yamashita R."/>
            <person name="Nakai K."/>
            <person name="Yada T."/>
            <person name="Nakamura Y."/>
            <person name="Ohara O."/>
            <person name="Isogai T."/>
            <person name="Sugano S."/>
        </authorList>
    </citation>
    <scope>NUCLEOTIDE SEQUENCE [LARGE SCALE MRNA] (ISOFORM 3)</scope>
    <source>
        <tissue>Brain</tissue>
    </source>
</reference>
<reference key="3">
    <citation type="submission" date="2006-07" db="EMBL/GenBank/DDBJ databases">
        <authorList>
            <person name="Totoki Y."/>
            <person name="Toyoda A."/>
            <person name="Takeda T."/>
            <person name="Sakaki Y."/>
            <person name="Tanaka A."/>
            <person name="Yokoyama S."/>
        </authorList>
    </citation>
    <scope>NUCLEOTIDE SEQUENCE [LARGE SCALE MRNA] (ISOFORM 4)</scope>
    <source>
        <tissue>Brain</tissue>
    </source>
</reference>
<reference key="4">
    <citation type="journal article" date="2006" name="Nature">
        <title>The DNA sequence and biological annotation of human chromosome 1.</title>
        <authorList>
            <person name="Gregory S.G."/>
            <person name="Barlow K.F."/>
            <person name="McLay K.E."/>
            <person name="Kaul R."/>
            <person name="Swarbreck D."/>
            <person name="Dunham A."/>
            <person name="Scott C.E."/>
            <person name="Howe K.L."/>
            <person name="Woodfine K."/>
            <person name="Spencer C.C.A."/>
            <person name="Jones M.C."/>
            <person name="Gillson C."/>
            <person name="Searle S."/>
            <person name="Zhou Y."/>
            <person name="Kokocinski F."/>
            <person name="McDonald L."/>
            <person name="Evans R."/>
            <person name="Phillips K."/>
            <person name="Atkinson A."/>
            <person name="Cooper R."/>
            <person name="Jones C."/>
            <person name="Hall R.E."/>
            <person name="Andrews T.D."/>
            <person name="Lloyd C."/>
            <person name="Ainscough R."/>
            <person name="Almeida J.P."/>
            <person name="Ambrose K.D."/>
            <person name="Anderson F."/>
            <person name="Andrew R.W."/>
            <person name="Ashwell R.I.S."/>
            <person name="Aubin K."/>
            <person name="Babbage A.K."/>
            <person name="Bagguley C.L."/>
            <person name="Bailey J."/>
            <person name="Beasley H."/>
            <person name="Bethel G."/>
            <person name="Bird C.P."/>
            <person name="Bray-Allen S."/>
            <person name="Brown J.Y."/>
            <person name="Brown A.J."/>
            <person name="Buckley D."/>
            <person name="Burton J."/>
            <person name="Bye J."/>
            <person name="Carder C."/>
            <person name="Chapman J.C."/>
            <person name="Clark S.Y."/>
            <person name="Clarke G."/>
            <person name="Clee C."/>
            <person name="Cobley V."/>
            <person name="Collier R.E."/>
            <person name="Corby N."/>
            <person name="Coville G.J."/>
            <person name="Davies J."/>
            <person name="Deadman R."/>
            <person name="Dunn M."/>
            <person name="Earthrowl M."/>
            <person name="Ellington A.G."/>
            <person name="Errington H."/>
            <person name="Frankish A."/>
            <person name="Frankland J."/>
            <person name="French L."/>
            <person name="Garner P."/>
            <person name="Garnett J."/>
            <person name="Gay L."/>
            <person name="Ghori M.R.J."/>
            <person name="Gibson R."/>
            <person name="Gilby L.M."/>
            <person name="Gillett W."/>
            <person name="Glithero R.J."/>
            <person name="Grafham D.V."/>
            <person name="Griffiths C."/>
            <person name="Griffiths-Jones S."/>
            <person name="Grocock R."/>
            <person name="Hammond S."/>
            <person name="Harrison E.S.I."/>
            <person name="Hart E."/>
            <person name="Haugen E."/>
            <person name="Heath P.D."/>
            <person name="Holmes S."/>
            <person name="Holt K."/>
            <person name="Howden P.J."/>
            <person name="Hunt A.R."/>
            <person name="Hunt S.E."/>
            <person name="Hunter G."/>
            <person name="Isherwood J."/>
            <person name="James R."/>
            <person name="Johnson C."/>
            <person name="Johnson D."/>
            <person name="Joy A."/>
            <person name="Kay M."/>
            <person name="Kershaw J.K."/>
            <person name="Kibukawa M."/>
            <person name="Kimberley A.M."/>
            <person name="King A."/>
            <person name="Knights A.J."/>
            <person name="Lad H."/>
            <person name="Laird G."/>
            <person name="Lawlor S."/>
            <person name="Leongamornlert D.A."/>
            <person name="Lloyd D.M."/>
            <person name="Loveland J."/>
            <person name="Lovell J."/>
            <person name="Lush M.J."/>
            <person name="Lyne R."/>
            <person name="Martin S."/>
            <person name="Mashreghi-Mohammadi M."/>
            <person name="Matthews L."/>
            <person name="Matthews N.S.W."/>
            <person name="McLaren S."/>
            <person name="Milne S."/>
            <person name="Mistry S."/>
            <person name="Moore M.J.F."/>
            <person name="Nickerson T."/>
            <person name="O'Dell C.N."/>
            <person name="Oliver K."/>
            <person name="Palmeiri A."/>
            <person name="Palmer S.A."/>
            <person name="Parker A."/>
            <person name="Patel D."/>
            <person name="Pearce A.V."/>
            <person name="Peck A.I."/>
            <person name="Pelan S."/>
            <person name="Phelps K."/>
            <person name="Phillimore B.J."/>
            <person name="Plumb R."/>
            <person name="Rajan J."/>
            <person name="Raymond C."/>
            <person name="Rouse G."/>
            <person name="Saenphimmachak C."/>
            <person name="Sehra H.K."/>
            <person name="Sheridan E."/>
            <person name="Shownkeen R."/>
            <person name="Sims S."/>
            <person name="Skuce C.D."/>
            <person name="Smith M."/>
            <person name="Steward C."/>
            <person name="Subramanian S."/>
            <person name="Sycamore N."/>
            <person name="Tracey A."/>
            <person name="Tromans A."/>
            <person name="Van Helmond Z."/>
            <person name="Wall M."/>
            <person name="Wallis J.M."/>
            <person name="White S."/>
            <person name="Whitehead S.L."/>
            <person name="Wilkinson J.E."/>
            <person name="Willey D.L."/>
            <person name="Williams H."/>
            <person name="Wilming L."/>
            <person name="Wray P.W."/>
            <person name="Wu Z."/>
            <person name="Coulson A."/>
            <person name="Vaudin M."/>
            <person name="Sulston J.E."/>
            <person name="Durbin R.M."/>
            <person name="Hubbard T."/>
            <person name="Wooster R."/>
            <person name="Dunham I."/>
            <person name="Carter N.P."/>
            <person name="McVean G."/>
            <person name="Ross M.T."/>
            <person name="Harrow J."/>
            <person name="Olson M.V."/>
            <person name="Beck S."/>
            <person name="Rogers J."/>
            <person name="Bentley D.R."/>
        </authorList>
    </citation>
    <scope>NUCLEOTIDE SEQUENCE [LARGE SCALE GENOMIC DNA]</scope>
</reference>
<reference key="5">
    <citation type="submission" date="2005-07" db="EMBL/GenBank/DDBJ databases">
        <authorList>
            <person name="Mural R.J."/>
            <person name="Istrail S."/>
            <person name="Sutton G.G."/>
            <person name="Florea L."/>
            <person name="Halpern A.L."/>
            <person name="Mobarry C.M."/>
            <person name="Lippert R."/>
            <person name="Walenz B."/>
            <person name="Shatkay H."/>
            <person name="Dew I."/>
            <person name="Miller J.R."/>
            <person name="Flanigan M.J."/>
            <person name="Edwards N.J."/>
            <person name="Bolanos R."/>
            <person name="Fasulo D."/>
            <person name="Halldorsson B.V."/>
            <person name="Hannenhalli S."/>
            <person name="Turner R."/>
            <person name="Yooseph S."/>
            <person name="Lu F."/>
            <person name="Nusskern D.R."/>
            <person name="Shue B.C."/>
            <person name="Zheng X.H."/>
            <person name="Zhong F."/>
            <person name="Delcher A.L."/>
            <person name="Huson D.H."/>
            <person name="Kravitz S.A."/>
            <person name="Mouchard L."/>
            <person name="Reinert K."/>
            <person name="Remington K.A."/>
            <person name="Clark A.G."/>
            <person name="Waterman M.S."/>
            <person name="Eichler E.E."/>
            <person name="Adams M.D."/>
            <person name="Hunkapiller M.W."/>
            <person name="Myers E.W."/>
            <person name="Venter J.C."/>
        </authorList>
    </citation>
    <scope>NUCLEOTIDE SEQUENCE [LARGE SCALE GENOMIC DNA]</scope>
</reference>
<reference key="6">
    <citation type="journal article" date="2004" name="Genome Res.">
        <title>The status, quality, and expansion of the NIH full-length cDNA project: the Mammalian Gene Collection (MGC).</title>
        <authorList>
            <consortium name="The MGC Project Team"/>
        </authorList>
    </citation>
    <scope>NUCLEOTIDE SEQUENCE [LARGE SCALE MRNA] (ISOFORMS 2 AND 3)</scope>
    <source>
        <tissue>Brain</tissue>
        <tissue>Testis</tissue>
    </source>
</reference>
<reference key="7">
    <citation type="journal article" date="2008" name="J. Proteome Res.">
        <title>Combining protein-based IMAC, peptide-based IMAC, and MudPIT for efficient phosphoproteomic analysis.</title>
        <authorList>
            <person name="Cantin G.T."/>
            <person name="Yi W."/>
            <person name="Lu B."/>
            <person name="Park S.K."/>
            <person name="Xu T."/>
            <person name="Lee J.-D."/>
            <person name="Yates J.R. III"/>
        </authorList>
    </citation>
    <scope>IDENTIFICATION BY MASS SPECTROMETRY [LARGE SCALE ANALYSIS]</scope>
    <source>
        <tissue>Cervix carcinoma</tissue>
    </source>
</reference>
<reference key="8">
    <citation type="journal article" date="2008" name="Proc. Natl. Acad. Sci. U.S.A.">
        <title>A quantitative atlas of mitotic phosphorylation.</title>
        <authorList>
            <person name="Dephoure N."/>
            <person name="Zhou C."/>
            <person name="Villen J."/>
            <person name="Beausoleil S.A."/>
            <person name="Bakalarski C.E."/>
            <person name="Elledge S.J."/>
            <person name="Gygi S.P."/>
        </authorList>
    </citation>
    <scope>PHOSPHORYLATION [LARGE SCALE ANALYSIS] AT THR-285; SER-292 AND SER-297</scope>
    <scope>IDENTIFICATION BY MASS SPECTROMETRY [LARGE SCALE ANALYSIS]</scope>
    <source>
        <tissue>Cervix carcinoma</tissue>
    </source>
</reference>
<reference key="9">
    <citation type="journal article" date="2010" name="Sci. Signal.">
        <title>Quantitative phosphoproteomics reveals widespread full phosphorylation site occupancy during mitosis.</title>
        <authorList>
            <person name="Olsen J.V."/>
            <person name="Vermeulen M."/>
            <person name="Santamaria A."/>
            <person name="Kumar C."/>
            <person name="Miller M.L."/>
            <person name="Jensen L.J."/>
            <person name="Gnad F."/>
            <person name="Cox J."/>
            <person name="Jensen T.S."/>
            <person name="Nigg E.A."/>
            <person name="Brunak S."/>
            <person name="Mann M."/>
        </authorList>
    </citation>
    <scope>PHOSPHORYLATION [LARGE SCALE ANALYSIS] AT SER-292</scope>
    <scope>IDENTIFICATION BY MASS SPECTROMETRY [LARGE SCALE ANALYSIS]</scope>
    <source>
        <tissue>Cervix carcinoma</tissue>
    </source>
</reference>
<reference key="10">
    <citation type="journal article" date="2013" name="J. Proteome Res.">
        <title>Toward a comprehensive characterization of a human cancer cell phosphoproteome.</title>
        <authorList>
            <person name="Zhou H."/>
            <person name="Di Palma S."/>
            <person name="Preisinger C."/>
            <person name="Peng M."/>
            <person name="Polat A.N."/>
            <person name="Heck A.J."/>
            <person name="Mohammed S."/>
        </authorList>
    </citation>
    <scope>PHOSPHORYLATION [LARGE SCALE ANALYSIS] AT SER-312; SER-422 AND THR-542</scope>
    <scope>IDENTIFICATION BY MASS SPECTROMETRY [LARGE SCALE ANALYSIS]</scope>
    <source>
        <tissue>Cervix carcinoma</tissue>
        <tissue>Erythroleukemia</tissue>
    </source>
</reference>